<reference key="1">
    <citation type="submission" date="2008-12" db="EMBL/GenBank/DDBJ databases">
        <title>Complete sequence of chromosome of Shewanella baltica OS223.</title>
        <authorList>
            <consortium name="US DOE Joint Genome Institute"/>
            <person name="Lucas S."/>
            <person name="Copeland A."/>
            <person name="Lapidus A."/>
            <person name="Glavina del Rio T."/>
            <person name="Dalin E."/>
            <person name="Tice H."/>
            <person name="Bruce D."/>
            <person name="Goodwin L."/>
            <person name="Pitluck S."/>
            <person name="Chertkov O."/>
            <person name="Meincke L."/>
            <person name="Brettin T."/>
            <person name="Detter J.C."/>
            <person name="Han C."/>
            <person name="Kuske C.R."/>
            <person name="Larimer F."/>
            <person name="Land M."/>
            <person name="Hauser L."/>
            <person name="Kyrpides N."/>
            <person name="Ovchinnikova G."/>
            <person name="Brettar I."/>
            <person name="Rodrigues J."/>
            <person name="Konstantinidis K."/>
            <person name="Tiedje J."/>
        </authorList>
    </citation>
    <scope>NUCLEOTIDE SEQUENCE [LARGE SCALE GENOMIC DNA]</scope>
    <source>
        <strain>OS223</strain>
    </source>
</reference>
<feature type="chain" id="PRO_1000201034" description="Glutamate-1-semialdehyde 2,1-aminomutase">
    <location>
        <begin position="1"/>
        <end position="430"/>
    </location>
</feature>
<feature type="modified residue" description="N6-(pyridoxal phosphate)lysine" evidence="1">
    <location>
        <position position="265"/>
    </location>
</feature>
<sequence length="430" mass="46096">MTRSEALFEQAKKTIPGGVNSPVRAFNGVGGSPLFIEKANGAYIYDADGKAYIDYVGSWGPMILGHNHPKIRAAVLAAVENGLSFGAPTELEVQMAEKVISMVPSIEQVRMVSSGTEATMSAIRLARGFTNRDKILKFEGCYHGHADCLLVKAGSGALTLGQPSSPGIPEDFAKHTLTAVYNDLDSVRTLFEQYPTDISCIIIEPVAGNMNCIPPIPGFLQGLRDICDEFGALMIIDEVMTGFRVSQSGAQGYYGVTPDLTTLGKVIGGGMPVGAFGGRKDVMQFIAPTGPVYQAGTLSGNPIAMSAGLAQMEALCEEGLYEELSAKTKRIAEGFKAAADKHGIPMAINYVGGMFGFFFTEQPEITRFDQVTQCNIEQFRIFYHGMLDEGVYLAPSAYEAGFLSMAHGEEEMRLTLEAADRVLASMKAAS</sequence>
<evidence type="ECO:0000255" key="1">
    <source>
        <dbReference type="HAMAP-Rule" id="MF_00375"/>
    </source>
</evidence>
<proteinExistence type="inferred from homology"/>
<keyword id="KW-0963">Cytoplasm</keyword>
<keyword id="KW-0413">Isomerase</keyword>
<keyword id="KW-0627">Porphyrin biosynthesis</keyword>
<keyword id="KW-0663">Pyridoxal phosphate</keyword>
<name>GSA_SHEB2</name>
<gene>
    <name evidence="1" type="primary">hemL</name>
    <name type="ordered locus">Sbal223_3153</name>
</gene>
<protein>
    <recommendedName>
        <fullName evidence="1">Glutamate-1-semialdehyde 2,1-aminomutase</fullName>
        <shortName evidence="1">GSA</shortName>
        <ecNumber evidence="1">5.4.3.8</ecNumber>
    </recommendedName>
    <alternativeName>
        <fullName evidence="1">Glutamate-1-semialdehyde aminotransferase</fullName>
        <shortName evidence="1">GSA-AT</shortName>
    </alternativeName>
</protein>
<organism>
    <name type="scientific">Shewanella baltica (strain OS223)</name>
    <dbReference type="NCBI Taxonomy" id="407976"/>
    <lineage>
        <taxon>Bacteria</taxon>
        <taxon>Pseudomonadati</taxon>
        <taxon>Pseudomonadota</taxon>
        <taxon>Gammaproteobacteria</taxon>
        <taxon>Alteromonadales</taxon>
        <taxon>Shewanellaceae</taxon>
        <taxon>Shewanella</taxon>
    </lineage>
</organism>
<dbReference type="EC" id="5.4.3.8" evidence="1"/>
<dbReference type="EMBL" id="CP001252">
    <property type="protein sequence ID" value="ACK47638.1"/>
    <property type="molecule type" value="Genomic_DNA"/>
</dbReference>
<dbReference type="RefSeq" id="WP_012088581.1">
    <property type="nucleotide sequence ID" value="NC_011663.1"/>
</dbReference>
<dbReference type="SMR" id="B8EBU3"/>
<dbReference type="KEGG" id="sbp:Sbal223_3153"/>
<dbReference type="HOGENOM" id="CLU_016922_1_5_6"/>
<dbReference type="UniPathway" id="UPA00251">
    <property type="reaction ID" value="UER00317"/>
</dbReference>
<dbReference type="Proteomes" id="UP000002507">
    <property type="component" value="Chromosome"/>
</dbReference>
<dbReference type="GO" id="GO:0005737">
    <property type="term" value="C:cytoplasm"/>
    <property type="evidence" value="ECO:0007669"/>
    <property type="project" value="UniProtKB-SubCell"/>
</dbReference>
<dbReference type="GO" id="GO:0042286">
    <property type="term" value="F:glutamate-1-semialdehyde 2,1-aminomutase activity"/>
    <property type="evidence" value="ECO:0007669"/>
    <property type="project" value="UniProtKB-UniRule"/>
</dbReference>
<dbReference type="GO" id="GO:0030170">
    <property type="term" value="F:pyridoxal phosphate binding"/>
    <property type="evidence" value="ECO:0007669"/>
    <property type="project" value="InterPro"/>
</dbReference>
<dbReference type="GO" id="GO:0008483">
    <property type="term" value="F:transaminase activity"/>
    <property type="evidence" value="ECO:0007669"/>
    <property type="project" value="InterPro"/>
</dbReference>
<dbReference type="GO" id="GO:0006782">
    <property type="term" value="P:protoporphyrinogen IX biosynthetic process"/>
    <property type="evidence" value="ECO:0007669"/>
    <property type="project" value="UniProtKB-UniRule"/>
</dbReference>
<dbReference type="CDD" id="cd00610">
    <property type="entry name" value="OAT_like"/>
    <property type="match status" value="1"/>
</dbReference>
<dbReference type="FunFam" id="3.40.640.10:FF:000021">
    <property type="entry name" value="Glutamate-1-semialdehyde 2,1-aminomutase"/>
    <property type="match status" value="1"/>
</dbReference>
<dbReference type="Gene3D" id="3.90.1150.10">
    <property type="entry name" value="Aspartate Aminotransferase, domain 1"/>
    <property type="match status" value="1"/>
</dbReference>
<dbReference type="Gene3D" id="3.40.640.10">
    <property type="entry name" value="Type I PLP-dependent aspartate aminotransferase-like (Major domain)"/>
    <property type="match status" value="1"/>
</dbReference>
<dbReference type="HAMAP" id="MF_00375">
    <property type="entry name" value="HemL_aminotrans_3"/>
    <property type="match status" value="1"/>
</dbReference>
<dbReference type="InterPro" id="IPR004639">
    <property type="entry name" value="4pyrrol_synth_GluAld_NH2Trfase"/>
</dbReference>
<dbReference type="InterPro" id="IPR005814">
    <property type="entry name" value="Aminotrans_3"/>
</dbReference>
<dbReference type="InterPro" id="IPR049704">
    <property type="entry name" value="Aminotrans_3_PPA_site"/>
</dbReference>
<dbReference type="InterPro" id="IPR015424">
    <property type="entry name" value="PyrdxlP-dep_Trfase"/>
</dbReference>
<dbReference type="InterPro" id="IPR015421">
    <property type="entry name" value="PyrdxlP-dep_Trfase_major"/>
</dbReference>
<dbReference type="InterPro" id="IPR015422">
    <property type="entry name" value="PyrdxlP-dep_Trfase_small"/>
</dbReference>
<dbReference type="NCBIfam" id="TIGR00713">
    <property type="entry name" value="hemL"/>
    <property type="match status" value="1"/>
</dbReference>
<dbReference type="NCBIfam" id="NF000818">
    <property type="entry name" value="PRK00062.1"/>
    <property type="match status" value="1"/>
</dbReference>
<dbReference type="PANTHER" id="PTHR43713">
    <property type="entry name" value="GLUTAMATE-1-SEMIALDEHYDE 2,1-AMINOMUTASE"/>
    <property type="match status" value="1"/>
</dbReference>
<dbReference type="PANTHER" id="PTHR43713:SF3">
    <property type="entry name" value="GLUTAMATE-1-SEMIALDEHYDE 2,1-AMINOMUTASE 1, CHLOROPLASTIC-RELATED"/>
    <property type="match status" value="1"/>
</dbReference>
<dbReference type="Pfam" id="PF00202">
    <property type="entry name" value="Aminotran_3"/>
    <property type="match status" value="1"/>
</dbReference>
<dbReference type="SUPFAM" id="SSF53383">
    <property type="entry name" value="PLP-dependent transferases"/>
    <property type="match status" value="1"/>
</dbReference>
<dbReference type="PROSITE" id="PS00600">
    <property type="entry name" value="AA_TRANSFER_CLASS_3"/>
    <property type="match status" value="1"/>
</dbReference>
<comment type="catalytic activity">
    <reaction evidence="1">
        <text>(S)-4-amino-5-oxopentanoate = 5-aminolevulinate</text>
        <dbReference type="Rhea" id="RHEA:14265"/>
        <dbReference type="ChEBI" id="CHEBI:57501"/>
        <dbReference type="ChEBI" id="CHEBI:356416"/>
        <dbReference type="EC" id="5.4.3.8"/>
    </reaction>
</comment>
<comment type="cofactor">
    <cofactor evidence="1">
        <name>pyridoxal 5'-phosphate</name>
        <dbReference type="ChEBI" id="CHEBI:597326"/>
    </cofactor>
</comment>
<comment type="pathway">
    <text evidence="1">Porphyrin-containing compound metabolism; protoporphyrin-IX biosynthesis; 5-aminolevulinate from L-glutamyl-tRNA(Glu): step 2/2.</text>
</comment>
<comment type="subunit">
    <text evidence="1">Homodimer.</text>
</comment>
<comment type="subcellular location">
    <subcellularLocation>
        <location evidence="1">Cytoplasm</location>
    </subcellularLocation>
</comment>
<comment type="similarity">
    <text evidence="1">Belongs to the class-III pyridoxal-phosphate-dependent aminotransferase family. HemL subfamily.</text>
</comment>
<accession>B8EBU3</accession>